<name>KAIB_THEVL</name>
<comment type="function">
    <text evidence="1">Key component of the KaiABC oscillator complex, which constitutes the main circadian regulator in cyanobacteria. Complex composition changes during the circadian cycle to control KaiC phosphorylation. KaiA stimulates KaiC autophosphorylation, while KaiB sequesters KaiA, leading to KaiC autodephosphorylation. Phospho-Ser-431 KaiC accumulation triggers binding of KaiB to form the KaiB(6):KaiC(6) complex, leading to changes in output regulators CikA and SasA. KaiB switches to a thioredoxin-like fold (KaiB(fs)) when bound to KaiC. KaiB(6):KaiC(6) formation exposes a site for KaiA binding that sequesters KaiA from KaiC, making the KaiC(6):KaiB(6):KaiA(12) complex that results in KaiC autodephosphorylation.</text>
</comment>
<comment type="function">
    <text evidence="1">A metamorphic protein which reversibly switches between an inactive tetrameric fold and a rare, thioredoxin-like monomeric fold (KaiB(fs)). KaiB(fs) binds phospho-KaiC, KaiA and CikA. KaiA and CikA compete for binding to KaiB(fs), and KaiB(fs) and SasA compete for binding to KaiC, thus the clock oscillator and output signal pathway are tightly coupled.</text>
</comment>
<comment type="subunit">
    <text evidence="1">The KaiABC complex composition changes during the circadian cycle to control KaiC phosphorylation. Complexes KaiC(6), KaiA(2-4):KaiC(6), KaiB(6):KaiC(6) and KaiC(6):KaiB(6):KaiA(12) are among the most important forms, many form cooperatively. Undergoes a major conformational rearrangment; in the free state forms homotetramers as a dimer of dimers. When bound to the CI domain of KaiC switches to a monomeric thioredoxin-fold (KaiB(fs)). KaiB(fs) binds CikA, leading it to dephosphorylate phospho-RpaA.</text>
</comment>
<comment type="domain">
    <text evidence="1">Has 2 forms, fold switches to a thioredoxin-like fold (KaiB(fs)) when bound to KaiC.</text>
</comment>
<comment type="similarity">
    <text evidence="1">Belongs to the KaiB family.</text>
</comment>
<sequence length="108" mass="12025">MAPLRKTYVLKLYVAGNTPNSVRALKTLNNILEKEFKGVYALKVIDVLKNPQLAEEDKILATPTLAKVLPPPVRRIIGDLSNREKVLIGLDLLYEEIGDQAEDDLGLE</sequence>
<evidence type="ECO:0000255" key="1">
    <source>
        <dbReference type="HAMAP-Rule" id="MF_01835"/>
    </source>
</evidence>
<reference key="1">
    <citation type="journal article" date="2004" name="Nat. Struct. Mol. Biol.">
        <title>Crystal structure of the C-terminal clock-oscillator domain of the cyanobacterial KaiA protein.</title>
        <authorList>
            <person name="Uzumaki T."/>
            <person name="Fujita M."/>
            <person name="Nakatsu T."/>
            <person name="Hayashi F."/>
            <person name="Shibata H."/>
            <person name="Itoh N."/>
            <person name="Kato H."/>
            <person name="Ishiura M."/>
        </authorList>
    </citation>
    <scope>NUCLEOTIDE SEQUENCE [GENOMIC DNA]</scope>
</reference>
<dbReference type="EMBL" id="AB121971">
    <property type="protein sequence ID" value="BAD21222.1"/>
    <property type="molecule type" value="Genomic_DNA"/>
</dbReference>
<dbReference type="SMR" id="Q6L8K0"/>
<dbReference type="GO" id="GO:0007623">
    <property type="term" value="P:circadian rhythm"/>
    <property type="evidence" value="ECO:0007669"/>
    <property type="project" value="UniProtKB-UniRule"/>
</dbReference>
<dbReference type="CDD" id="cd02978">
    <property type="entry name" value="KaiB_like"/>
    <property type="match status" value="1"/>
</dbReference>
<dbReference type="FunFam" id="3.40.30.10:FF:000180">
    <property type="entry name" value="Circadian clock protein KaiB"/>
    <property type="match status" value="1"/>
</dbReference>
<dbReference type="Gene3D" id="3.40.30.10">
    <property type="entry name" value="Glutaredoxin"/>
    <property type="match status" value="1"/>
</dbReference>
<dbReference type="HAMAP" id="MF_01835">
    <property type="entry name" value="KaiB"/>
    <property type="match status" value="1"/>
</dbReference>
<dbReference type="InterPro" id="IPR013474">
    <property type="entry name" value="Circ_KaiB"/>
</dbReference>
<dbReference type="InterPro" id="IPR039022">
    <property type="entry name" value="KaiB-like"/>
</dbReference>
<dbReference type="InterPro" id="IPR011649">
    <property type="entry name" value="KaiB_domain"/>
</dbReference>
<dbReference type="InterPro" id="IPR036249">
    <property type="entry name" value="Thioredoxin-like_sf"/>
</dbReference>
<dbReference type="NCBIfam" id="TIGR02654">
    <property type="entry name" value="circ_KaiB"/>
    <property type="match status" value="1"/>
</dbReference>
<dbReference type="NCBIfam" id="NF006798">
    <property type="entry name" value="PRK09301.1"/>
    <property type="match status" value="1"/>
</dbReference>
<dbReference type="PANTHER" id="PTHR41709:SF2">
    <property type="entry name" value="CIRCADIAN CLOCK PROTEIN KAIB2"/>
    <property type="match status" value="1"/>
</dbReference>
<dbReference type="PANTHER" id="PTHR41709">
    <property type="entry name" value="KAIB-LIKE PROTEIN 1"/>
    <property type="match status" value="1"/>
</dbReference>
<dbReference type="Pfam" id="PF07689">
    <property type="entry name" value="KaiB"/>
    <property type="match status" value="1"/>
</dbReference>
<dbReference type="SMART" id="SM01248">
    <property type="entry name" value="KaiB"/>
    <property type="match status" value="1"/>
</dbReference>
<dbReference type="SUPFAM" id="SSF52833">
    <property type="entry name" value="Thioredoxin-like"/>
    <property type="match status" value="1"/>
</dbReference>
<proteinExistence type="inferred from homology"/>
<organism>
    <name type="scientific">Thermostichus vulcanus</name>
    <name type="common">Synechococcus vulcanus</name>
    <dbReference type="NCBI Taxonomy" id="32053"/>
    <lineage>
        <taxon>Bacteria</taxon>
        <taxon>Bacillati</taxon>
        <taxon>Cyanobacteriota</taxon>
        <taxon>Cyanophyceae</taxon>
        <taxon>Thermostichales</taxon>
        <taxon>Thermostichaceae</taxon>
        <taxon>Thermostichus</taxon>
    </lineage>
</organism>
<accession>Q6L8K0</accession>
<protein>
    <recommendedName>
        <fullName evidence="1">Circadian clock oscillator protein KaiB</fullName>
    </recommendedName>
</protein>
<keyword id="KW-0090">Biological rhythms</keyword>
<feature type="chain" id="PRO_0000217770" description="Circadian clock oscillator protein KaiB">
    <location>
        <begin position="1"/>
        <end position="108"/>
    </location>
</feature>
<gene>
    <name evidence="1" type="primary">kaiB</name>
</gene>